<evidence type="ECO:0000255" key="1">
    <source>
        <dbReference type="HAMAP-Rule" id="MF_00692"/>
    </source>
</evidence>
<keyword id="KW-0067">ATP-binding</keyword>
<keyword id="KW-0460">Magnesium</keyword>
<keyword id="KW-0464">Manganese</keyword>
<keyword id="KW-0479">Metal-binding</keyword>
<keyword id="KW-0547">Nucleotide-binding</keyword>
<keyword id="KW-0548">Nucleotidyltransferase</keyword>
<keyword id="KW-1185">Reference proteome</keyword>
<keyword id="KW-0808">Transferase</keyword>
<sequence length="488" mass="55071">MTKNNETGWNLDNSYTTLPQSFYTEIPPTPVSSPELVKLNHSLAISLGLTPEELKKEAEIAIFAGNGLPEGAHPLAQAYAGHQFGHFNMLGDGRALLIGEQITPSGERFDIQLKGSGPTPYSRRGDGRAALGPMLREYIISEAMYALDIPTTRSLAVVTTGEPTYRETKLPGAILTRVASSHIRVGTFQYAAARGSIEDLKSLADYTIKRHYPEIESHENRYTALLQEVIKRQASLIAKWQLAGFIHGVMNTDNITISGETIDYGPCAFMDNYDQGTVFSSIDTQGRYAYGNQPYMAAWDLARLAESLIPILHEDEEEALKIAQDEISKFSVQYEKQWFLGMKKKLGLFSNEEQDHSLIEQLLKMMEKYKADYTNTFRSLTLDAIENTALFESPEFKEWYKLWQSRLDRQEQSKENAYEMMKNNNPSIIPRNHRVEEALEAAVTNDDYSVMEKLLEALSNPYAYSTDQEEYCAPPAPTNRPYRTFCGT</sequence>
<feature type="chain" id="PRO_0000121406" description="Protein nucleotidyltransferase YdiU">
    <location>
        <begin position="1"/>
        <end position="488"/>
    </location>
</feature>
<feature type="active site" description="Proton acceptor" evidence="1">
    <location>
        <position position="253"/>
    </location>
</feature>
<feature type="binding site" evidence="1">
    <location>
        <position position="91"/>
    </location>
    <ligand>
        <name>ATP</name>
        <dbReference type="ChEBI" id="CHEBI:30616"/>
    </ligand>
</feature>
<feature type="binding site" evidence="1">
    <location>
        <position position="93"/>
    </location>
    <ligand>
        <name>ATP</name>
        <dbReference type="ChEBI" id="CHEBI:30616"/>
    </ligand>
</feature>
<feature type="binding site" evidence="1">
    <location>
        <position position="94"/>
    </location>
    <ligand>
        <name>ATP</name>
        <dbReference type="ChEBI" id="CHEBI:30616"/>
    </ligand>
</feature>
<feature type="binding site" evidence="1">
    <location>
        <position position="114"/>
    </location>
    <ligand>
        <name>ATP</name>
        <dbReference type="ChEBI" id="CHEBI:30616"/>
    </ligand>
</feature>
<feature type="binding site" evidence="1">
    <location>
        <position position="126"/>
    </location>
    <ligand>
        <name>ATP</name>
        <dbReference type="ChEBI" id="CHEBI:30616"/>
    </ligand>
</feature>
<feature type="binding site" evidence="1">
    <location>
        <position position="127"/>
    </location>
    <ligand>
        <name>ATP</name>
        <dbReference type="ChEBI" id="CHEBI:30616"/>
    </ligand>
</feature>
<feature type="binding site" evidence="1">
    <location>
        <position position="177"/>
    </location>
    <ligand>
        <name>ATP</name>
        <dbReference type="ChEBI" id="CHEBI:30616"/>
    </ligand>
</feature>
<feature type="binding site" evidence="1">
    <location>
        <position position="184"/>
    </location>
    <ligand>
        <name>ATP</name>
        <dbReference type="ChEBI" id="CHEBI:30616"/>
    </ligand>
</feature>
<feature type="binding site" evidence="1">
    <location>
        <position position="254"/>
    </location>
    <ligand>
        <name>Mg(2+)</name>
        <dbReference type="ChEBI" id="CHEBI:18420"/>
    </ligand>
</feature>
<feature type="binding site" evidence="1">
    <location>
        <position position="263"/>
    </location>
    <ligand>
        <name>ATP</name>
        <dbReference type="ChEBI" id="CHEBI:30616"/>
    </ligand>
</feature>
<feature type="binding site" evidence="1">
    <location>
        <position position="263"/>
    </location>
    <ligand>
        <name>Mg(2+)</name>
        <dbReference type="ChEBI" id="CHEBI:18420"/>
    </ligand>
</feature>
<gene>
    <name evidence="1" type="primary">ydiU</name>
    <name evidence="1" type="synonym">selO</name>
    <name type="ordered locus">BC_3499</name>
</gene>
<comment type="function">
    <text evidence="1">Nucleotidyltransferase involved in the post-translational modification of proteins. It can catalyze the addition of adenosine monophosphate (AMP) or uridine monophosphate (UMP) to a protein, resulting in modifications known as AMPylation and UMPylation.</text>
</comment>
<comment type="catalytic activity">
    <reaction evidence="1">
        <text>L-seryl-[protein] + ATP = 3-O-(5'-adenylyl)-L-seryl-[protein] + diphosphate</text>
        <dbReference type="Rhea" id="RHEA:58120"/>
        <dbReference type="Rhea" id="RHEA-COMP:9863"/>
        <dbReference type="Rhea" id="RHEA-COMP:15073"/>
        <dbReference type="ChEBI" id="CHEBI:29999"/>
        <dbReference type="ChEBI" id="CHEBI:30616"/>
        <dbReference type="ChEBI" id="CHEBI:33019"/>
        <dbReference type="ChEBI" id="CHEBI:142516"/>
        <dbReference type="EC" id="2.7.7.108"/>
    </reaction>
</comment>
<comment type="catalytic activity">
    <reaction evidence="1">
        <text>L-threonyl-[protein] + ATP = 3-O-(5'-adenylyl)-L-threonyl-[protein] + diphosphate</text>
        <dbReference type="Rhea" id="RHEA:54292"/>
        <dbReference type="Rhea" id="RHEA-COMP:11060"/>
        <dbReference type="Rhea" id="RHEA-COMP:13847"/>
        <dbReference type="ChEBI" id="CHEBI:30013"/>
        <dbReference type="ChEBI" id="CHEBI:30616"/>
        <dbReference type="ChEBI" id="CHEBI:33019"/>
        <dbReference type="ChEBI" id="CHEBI:138113"/>
        <dbReference type="EC" id="2.7.7.108"/>
    </reaction>
</comment>
<comment type="catalytic activity">
    <reaction evidence="1">
        <text>L-tyrosyl-[protein] + ATP = O-(5'-adenylyl)-L-tyrosyl-[protein] + diphosphate</text>
        <dbReference type="Rhea" id="RHEA:54288"/>
        <dbReference type="Rhea" id="RHEA-COMP:10136"/>
        <dbReference type="Rhea" id="RHEA-COMP:13846"/>
        <dbReference type="ChEBI" id="CHEBI:30616"/>
        <dbReference type="ChEBI" id="CHEBI:33019"/>
        <dbReference type="ChEBI" id="CHEBI:46858"/>
        <dbReference type="ChEBI" id="CHEBI:83624"/>
        <dbReference type="EC" id="2.7.7.108"/>
    </reaction>
</comment>
<comment type="catalytic activity">
    <reaction evidence="1">
        <text>L-histidyl-[protein] + UTP = N(tele)-(5'-uridylyl)-L-histidyl-[protein] + diphosphate</text>
        <dbReference type="Rhea" id="RHEA:83891"/>
        <dbReference type="Rhea" id="RHEA-COMP:9745"/>
        <dbReference type="Rhea" id="RHEA-COMP:20239"/>
        <dbReference type="ChEBI" id="CHEBI:29979"/>
        <dbReference type="ChEBI" id="CHEBI:33019"/>
        <dbReference type="ChEBI" id="CHEBI:46398"/>
        <dbReference type="ChEBI" id="CHEBI:233474"/>
    </reaction>
</comment>
<comment type="catalytic activity">
    <reaction evidence="1">
        <text>L-seryl-[protein] + UTP = O-(5'-uridylyl)-L-seryl-[protein] + diphosphate</text>
        <dbReference type="Rhea" id="RHEA:64604"/>
        <dbReference type="Rhea" id="RHEA-COMP:9863"/>
        <dbReference type="Rhea" id="RHEA-COMP:16635"/>
        <dbReference type="ChEBI" id="CHEBI:29999"/>
        <dbReference type="ChEBI" id="CHEBI:33019"/>
        <dbReference type="ChEBI" id="CHEBI:46398"/>
        <dbReference type="ChEBI" id="CHEBI:156051"/>
    </reaction>
</comment>
<comment type="catalytic activity">
    <reaction evidence="1">
        <text>L-tyrosyl-[protein] + UTP = O-(5'-uridylyl)-L-tyrosyl-[protein] + diphosphate</text>
        <dbReference type="Rhea" id="RHEA:83887"/>
        <dbReference type="Rhea" id="RHEA-COMP:10136"/>
        <dbReference type="Rhea" id="RHEA-COMP:20238"/>
        <dbReference type="ChEBI" id="CHEBI:33019"/>
        <dbReference type="ChEBI" id="CHEBI:46398"/>
        <dbReference type="ChEBI" id="CHEBI:46858"/>
        <dbReference type="ChEBI" id="CHEBI:90602"/>
    </reaction>
</comment>
<comment type="cofactor">
    <cofactor evidence="1">
        <name>Mg(2+)</name>
        <dbReference type="ChEBI" id="CHEBI:18420"/>
    </cofactor>
    <cofactor evidence="1">
        <name>Mn(2+)</name>
        <dbReference type="ChEBI" id="CHEBI:29035"/>
    </cofactor>
</comment>
<comment type="similarity">
    <text evidence="1">Belongs to the SELO family.</text>
</comment>
<reference key="1">
    <citation type="journal article" date="2003" name="Nature">
        <title>Genome sequence of Bacillus cereus and comparative analysis with Bacillus anthracis.</title>
        <authorList>
            <person name="Ivanova N."/>
            <person name="Sorokin A."/>
            <person name="Anderson I."/>
            <person name="Galleron N."/>
            <person name="Candelon B."/>
            <person name="Kapatral V."/>
            <person name="Bhattacharyya A."/>
            <person name="Reznik G."/>
            <person name="Mikhailova N."/>
            <person name="Lapidus A."/>
            <person name="Chu L."/>
            <person name="Mazur M."/>
            <person name="Goltsman E."/>
            <person name="Larsen N."/>
            <person name="D'Souza M."/>
            <person name="Walunas T."/>
            <person name="Grechkin Y."/>
            <person name="Pusch G."/>
            <person name="Haselkorn R."/>
            <person name="Fonstein M."/>
            <person name="Ehrlich S.D."/>
            <person name="Overbeek R."/>
            <person name="Kyrpides N.C."/>
        </authorList>
    </citation>
    <scope>NUCLEOTIDE SEQUENCE [LARGE SCALE GENOMIC DNA]</scope>
    <source>
        <strain>ATCC 14579 / DSM 31 / CCUG 7414 / JCM 2152 / NBRC 15305 / NCIMB 9373 / NCTC 2599 / NRRL B-3711</strain>
    </source>
</reference>
<protein>
    <recommendedName>
        <fullName evidence="1">Protein nucleotidyltransferase YdiU</fullName>
        <ecNumber evidence="1">2.7.7.-</ecNumber>
    </recommendedName>
    <alternativeName>
        <fullName evidence="1">Protein adenylyltransferase YdiU</fullName>
        <ecNumber evidence="1">2.7.7.108</ecNumber>
    </alternativeName>
    <alternativeName>
        <fullName evidence="1">Protein uridylyltransferase YdiU</fullName>
        <ecNumber evidence="1">2.7.7.-</ecNumber>
    </alternativeName>
</protein>
<organism>
    <name type="scientific">Bacillus cereus (strain ATCC 14579 / DSM 31 / CCUG 7414 / JCM 2152 / NBRC 15305 / NCIMB 9373 / NCTC 2599 / NRRL B-3711)</name>
    <dbReference type="NCBI Taxonomy" id="226900"/>
    <lineage>
        <taxon>Bacteria</taxon>
        <taxon>Bacillati</taxon>
        <taxon>Bacillota</taxon>
        <taxon>Bacilli</taxon>
        <taxon>Bacillales</taxon>
        <taxon>Bacillaceae</taxon>
        <taxon>Bacillus</taxon>
        <taxon>Bacillus cereus group</taxon>
    </lineage>
</organism>
<accession>Q813A5</accession>
<name>SELO_BACCR</name>
<dbReference type="EC" id="2.7.7.-" evidence="1"/>
<dbReference type="EC" id="2.7.7.108" evidence="1"/>
<dbReference type="EMBL" id="AE016877">
    <property type="protein sequence ID" value="AAP10433.1"/>
    <property type="molecule type" value="Genomic_DNA"/>
</dbReference>
<dbReference type="RefSeq" id="NP_833232.1">
    <property type="nucleotide sequence ID" value="NC_004722.1"/>
</dbReference>
<dbReference type="RefSeq" id="WP_000164930.1">
    <property type="nucleotide sequence ID" value="NC_004722.1"/>
</dbReference>
<dbReference type="SMR" id="Q813A5"/>
<dbReference type="STRING" id="226900.BC_3499"/>
<dbReference type="KEGG" id="bce:BC3499"/>
<dbReference type="PATRIC" id="fig|226900.8.peg.3589"/>
<dbReference type="HOGENOM" id="CLU_010245_4_1_9"/>
<dbReference type="OrthoDB" id="9773505at2"/>
<dbReference type="Proteomes" id="UP000001417">
    <property type="component" value="Chromosome"/>
</dbReference>
<dbReference type="GO" id="GO:0070733">
    <property type="term" value="F:AMPylase activity"/>
    <property type="evidence" value="ECO:0000318"/>
    <property type="project" value="GO_Central"/>
</dbReference>
<dbReference type="GO" id="GO:0005524">
    <property type="term" value="F:ATP binding"/>
    <property type="evidence" value="ECO:0007669"/>
    <property type="project" value="UniProtKB-UniRule"/>
</dbReference>
<dbReference type="GO" id="GO:0000287">
    <property type="term" value="F:magnesium ion binding"/>
    <property type="evidence" value="ECO:0007669"/>
    <property type="project" value="UniProtKB-UniRule"/>
</dbReference>
<dbReference type="HAMAP" id="MF_00692">
    <property type="entry name" value="YdiU_SelO"/>
    <property type="match status" value="1"/>
</dbReference>
<dbReference type="InterPro" id="IPR003846">
    <property type="entry name" value="SelO"/>
</dbReference>
<dbReference type="NCBIfam" id="NF000658">
    <property type="entry name" value="PRK00029.1"/>
    <property type="match status" value="1"/>
</dbReference>
<dbReference type="PANTHER" id="PTHR32057">
    <property type="entry name" value="PROTEIN ADENYLYLTRANSFERASE SELO, MITOCHONDRIAL"/>
    <property type="match status" value="1"/>
</dbReference>
<dbReference type="PANTHER" id="PTHR32057:SF14">
    <property type="entry name" value="PROTEIN ADENYLYLTRANSFERASE SELO, MITOCHONDRIAL"/>
    <property type="match status" value="1"/>
</dbReference>
<dbReference type="Pfam" id="PF02696">
    <property type="entry name" value="SelO"/>
    <property type="match status" value="1"/>
</dbReference>
<proteinExistence type="inferred from homology"/>